<comment type="function">
    <text evidence="1">Na(+)/H(+) antiporter that extrudes sodium in exchange for external protons.</text>
</comment>
<comment type="catalytic activity">
    <reaction evidence="1">
        <text>Na(+)(in) + 2 H(+)(out) = Na(+)(out) + 2 H(+)(in)</text>
        <dbReference type="Rhea" id="RHEA:29251"/>
        <dbReference type="ChEBI" id="CHEBI:15378"/>
        <dbReference type="ChEBI" id="CHEBI:29101"/>
    </reaction>
    <physiologicalReaction direction="left-to-right" evidence="1">
        <dbReference type="Rhea" id="RHEA:29252"/>
    </physiologicalReaction>
</comment>
<comment type="subcellular location">
    <subcellularLocation>
        <location evidence="1">Cell inner membrane</location>
        <topology evidence="1">Multi-pass membrane protein</topology>
    </subcellularLocation>
</comment>
<comment type="similarity">
    <text evidence="1">Belongs to the NhaA Na(+)/H(+) (TC 2.A.33) antiporter family.</text>
</comment>
<feature type="chain" id="PRO_0000334242" description="Na(+)/H(+) antiporter NhaA">
    <location>
        <begin position="1"/>
        <end position="398"/>
    </location>
</feature>
<feature type="transmembrane region" description="Helical" evidence="1">
    <location>
        <begin position="21"/>
        <end position="41"/>
    </location>
</feature>
<feature type="transmembrane region" description="Helical" evidence="1">
    <location>
        <begin position="66"/>
        <end position="86"/>
    </location>
</feature>
<feature type="transmembrane region" description="Helical" evidence="1">
    <location>
        <begin position="101"/>
        <end position="121"/>
    </location>
</feature>
<feature type="transmembrane region" description="Helical" evidence="1">
    <location>
        <begin position="132"/>
        <end position="152"/>
    </location>
</feature>
<feature type="transmembrane region" description="Helical" evidence="1">
    <location>
        <begin position="161"/>
        <end position="181"/>
    </location>
</feature>
<feature type="transmembrane region" description="Helical" evidence="1">
    <location>
        <begin position="184"/>
        <end position="204"/>
    </location>
</feature>
<feature type="transmembrane region" description="Helical" evidence="1">
    <location>
        <begin position="216"/>
        <end position="236"/>
    </location>
</feature>
<feature type="transmembrane region" description="Helical" evidence="1">
    <location>
        <begin position="274"/>
        <end position="294"/>
    </location>
</feature>
<feature type="transmembrane region" description="Helical" evidence="1">
    <location>
        <begin position="305"/>
        <end position="325"/>
    </location>
</feature>
<feature type="transmembrane region" description="Helical" evidence="1">
    <location>
        <begin position="343"/>
        <end position="363"/>
    </location>
</feature>
<feature type="transmembrane region" description="Helical" evidence="1">
    <location>
        <begin position="374"/>
        <end position="394"/>
    </location>
</feature>
<proteinExistence type="inferred from homology"/>
<sequence length="398" mass="41497">MPTTPTRAPSLLQAFLRSEALGGYVLMIAAVLALIVANSPLAPAYFQLLGTKLGYASEAFTLKESVLHWINDGLMAVFFLLVGLEIKREMLDGQLRGVSRIVLPGVAAAGGMLMPALVYLLVNQGDPAGLRGWAIPAATDIAFALGILALLGSRVPTSLKIFLTALAILDDLGAIAIIAVFYTAELNTSALAAAGGLLAALCVLNRLRVLRLAPYLLVGALLWYFVLKSGVHATLAGVALALAIPLRRQDPRQPGAEHSPLHALEHALHRPVALLIVPVFGFANAGVSFDGMGIDSLTAPIPLGIALGLFLGKQLGVFGFAWLAIRTGLASMPRHASFAQLYGVALLCGIGFTMSLFIGALAFDDAATIDATKIGVLTGSLVSAVLGYALLRVLPPAD</sequence>
<dbReference type="EMBL" id="BX640437">
    <property type="protein sequence ID" value="CAE30715.1"/>
    <property type="molecule type" value="Genomic_DNA"/>
</dbReference>
<dbReference type="RefSeq" id="WP_003807230.1">
    <property type="nucleotide sequence ID" value="NC_002927.3"/>
</dbReference>
<dbReference type="SMR" id="Q7WQV8"/>
<dbReference type="GeneID" id="93206444"/>
<dbReference type="KEGG" id="bbr:BB0217"/>
<dbReference type="eggNOG" id="COG3004">
    <property type="taxonomic scope" value="Bacteria"/>
</dbReference>
<dbReference type="HOGENOM" id="CLU_015803_1_0_4"/>
<dbReference type="Proteomes" id="UP000001027">
    <property type="component" value="Chromosome"/>
</dbReference>
<dbReference type="GO" id="GO:0005886">
    <property type="term" value="C:plasma membrane"/>
    <property type="evidence" value="ECO:0007669"/>
    <property type="project" value="UniProtKB-SubCell"/>
</dbReference>
<dbReference type="GO" id="GO:0015385">
    <property type="term" value="F:sodium:proton antiporter activity"/>
    <property type="evidence" value="ECO:0007669"/>
    <property type="project" value="TreeGrafter"/>
</dbReference>
<dbReference type="GO" id="GO:0006885">
    <property type="term" value="P:regulation of pH"/>
    <property type="evidence" value="ECO:0007669"/>
    <property type="project" value="InterPro"/>
</dbReference>
<dbReference type="Gene3D" id="1.20.1530.10">
    <property type="entry name" value="Na+/H+ antiporter like domain"/>
    <property type="match status" value="1"/>
</dbReference>
<dbReference type="HAMAP" id="MF_01844">
    <property type="entry name" value="NhaA"/>
    <property type="match status" value="1"/>
</dbReference>
<dbReference type="InterPro" id="IPR023171">
    <property type="entry name" value="Na/H_antiporter_dom_sf"/>
</dbReference>
<dbReference type="InterPro" id="IPR004670">
    <property type="entry name" value="NhaA"/>
</dbReference>
<dbReference type="NCBIfam" id="TIGR00773">
    <property type="entry name" value="NhaA"/>
    <property type="match status" value="1"/>
</dbReference>
<dbReference type="NCBIfam" id="NF007111">
    <property type="entry name" value="PRK09560.1"/>
    <property type="match status" value="1"/>
</dbReference>
<dbReference type="NCBIfam" id="NF007112">
    <property type="entry name" value="PRK09561.1"/>
    <property type="match status" value="1"/>
</dbReference>
<dbReference type="PANTHER" id="PTHR30341:SF0">
    <property type="entry name" value="NA(+)_H(+) ANTIPORTER NHAA"/>
    <property type="match status" value="1"/>
</dbReference>
<dbReference type="PANTHER" id="PTHR30341">
    <property type="entry name" value="SODIUM ION/PROTON ANTIPORTER NHAA-RELATED"/>
    <property type="match status" value="1"/>
</dbReference>
<dbReference type="Pfam" id="PF06965">
    <property type="entry name" value="Na_H_antiport_1"/>
    <property type="match status" value="1"/>
</dbReference>
<keyword id="KW-0050">Antiport</keyword>
<keyword id="KW-0997">Cell inner membrane</keyword>
<keyword id="KW-1003">Cell membrane</keyword>
<keyword id="KW-0406">Ion transport</keyword>
<keyword id="KW-0472">Membrane</keyword>
<keyword id="KW-0915">Sodium</keyword>
<keyword id="KW-0739">Sodium transport</keyword>
<keyword id="KW-0812">Transmembrane</keyword>
<keyword id="KW-1133">Transmembrane helix</keyword>
<keyword id="KW-0813">Transport</keyword>
<accession>Q7WQV8</accession>
<gene>
    <name evidence="1" type="primary">nhaA</name>
    <name type="ordered locus">BB0217</name>
</gene>
<name>NHAA_BORBR</name>
<organism>
    <name type="scientific">Bordetella bronchiseptica (strain ATCC BAA-588 / NCTC 13252 / RB50)</name>
    <name type="common">Alcaligenes bronchisepticus</name>
    <dbReference type="NCBI Taxonomy" id="257310"/>
    <lineage>
        <taxon>Bacteria</taxon>
        <taxon>Pseudomonadati</taxon>
        <taxon>Pseudomonadota</taxon>
        <taxon>Betaproteobacteria</taxon>
        <taxon>Burkholderiales</taxon>
        <taxon>Alcaligenaceae</taxon>
        <taxon>Bordetella</taxon>
    </lineage>
</organism>
<evidence type="ECO:0000255" key="1">
    <source>
        <dbReference type="HAMAP-Rule" id="MF_01844"/>
    </source>
</evidence>
<reference key="1">
    <citation type="journal article" date="2003" name="Nat. Genet.">
        <title>Comparative analysis of the genome sequences of Bordetella pertussis, Bordetella parapertussis and Bordetella bronchiseptica.</title>
        <authorList>
            <person name="Parkhill J."/>
            <person name="Sebaihia M."/>
            <person name="Preston A."/>
            <person name="Murphy L.D."/>
            <person name="Thomson N.R."/>
            <person name="Harris D.E."/>
            <person name="Holden M.T.G."/>
            <person name="Churcher C.M."/>
            <person name="Bentley S.D."/>
            <person name="Mungall K.L."/>
            <person name="Cerdeno-Tarraga A.-M."/>
            <person name="Temple L."/>
            <person name="James K.D."/>
            <person name="Harris B."/>
            <person name="Quail M.A."/>
            <person name="Achtman M."/>
            <person name="Atkin R."/>
            <person name="Baker S."/>
            <person name="Basham D."/>
            <person name="Bason N."/>
            <person name="Cherevach I."/>
            <person name="Chillingworth T."/>
            <person name="Collins M."/>
            <person name="Cronin A."/>
            <person name="Davis P."/>
            <person name="Doggett J."/>
            <person name="Feltwell T."/>
            <person name="Goble A."/>
            <person name="Hamlin N."/>
            <person name="Hauser H."/>
            <person name="Holroyd S."/>
            <person name="Jagels K."/>
            <person name="Leather S."/>
            <person name="Moule S."/>
            <person name="Norberczak H."/>
            <person name="O'Neil S."/>
            <person name="Ormond D."/>
            <person name="Price C."/>
            <person name="Rabbinowitsch E."/>
            <person name="Rutter S."/>
            <person name="Sanders M."/>
            <person name="Saunders D."/>
            <person name="Seeger K."/>
            <person name="Sharp S."/>
            <person name="Simmonds M."/>
            <person name="Skelton J."/>
            <person name="Squares R."/>
            <person name="Squares S."/>
            <person name="Stevens K."/>
            <person name="Unwin L."/>
            <person name="Whitehead S."/>
            <person name="Barrell B.G."/>
            <person name="Maskell D.J."/>
        </authorList>
    </citation>
    <scope>NUCLEOTIDE SEQUENCE [LARGE SCALE GENOMIC DNA]</scope>
    <source>
        <strain>ATCC BAA-588 / NCTC 13252 / RB50</strain>
    </source>
</reference>
<protein>
    <recommendedName>
        <fullName evidence="1">Na(+)/H(+) antiporter NhaA</fullName>
    </recommendedName>
    <alternativeName>
        <fullName evidence="1">Sodium/proton antiporter NhaA</fullName>
    </alternativeName>
</protein>